<gene>
    <name type="primary">ilvE</name>
    <name type="ordered locus">RT0414</name>
</gene>
<dbReference type="EC" id="2.6.1.42"/>
<dbReference type="EMBL" id="AJ293310">
    <property type="protein sequence ID" value="CAC33721.1"/>
    <property type="molecule type" value="Genomic_DNA"/>
</dbReference>
<dbReference type="EMBL" id="AE017197">
    <property type="protein sequence ID" value="AAU03891.1"/>
    <property type="molecule type" value="Genomic_DNA"/>
</dbReference>
<dbReference type="SMR" id="Q9AKE5"/>
<dbReference type="KEGG" id="rty:RT0414"/>
<dbReference type="eggNOG" id="COG0115">
    <property type="taxonomic scope" value="Bacteria"/>
</dbReference>
<dbReference type="HOGENOM" id="CLU_020844_3_1_5"/>
<dbReference type="UniPathway" id="UPA00047">
    <property type="reaction ID" value="UER00058"/>
</dbReference>
<dbReference type="UniPathway" id="UPA00048">
    <property type="reaction ID" value="UER00073"/>
</dbReference>
<dbReference type="UniPathway" id="UPA00049">
    <property type="reaction ID" value="UER00062"/>
</dbReference>
<dbReference type="Proteomes" id="UP000000604">
    <property type="component" value="Chromosome"/>
</dbReference>
<dbReference type="GO" id="GO:0005829">
    <property type="term" value="C:cytosol"/>
    <property type="evidence" value="ECO:0007669"/>
    <property type="project" value="TreeGrafter"/>
</dbReference>
<dbReference type="GO" id="GO:0052656">
    <property type="term" value="F:L-isoleucine-2-oxoglutarate transaminase activity"/>
    <property type="evidence" value="ECO:0007669"/>
    <property type="project" value="RHEA"/>
</dbReference>
<dbReference type="GO" id="GO:0052654">
    <property type="term" value="F:L-leucine-2-oxoglutarate transaminase activity"/>
    <property type="evidence" value="ECO:0007669"/>
    <property type="project" value="RHEA"/>
</dbReference>
<dbReference type="GO" id="GO:0052655">
    <property type="term" value="F:L-valine-2-oxoglutarate transaminase activity"/>
    <property type="evidence" value="ECO:0007669"/>
    <property type="project" value="RHEA"/>
</dbReference>
<dbReference type="GO" id="GO:0009097">
    <property type="term" value="P:isoleucine biosynthetic process"/>
    <property type="evidence" value="ECO:0007669"/>
    <property type="project" value="UniProtKB-UniPathway"/>
</dbReference>
<dbReference type="GO" id="GO:0009098">
    <property type="term" value="P:L-leucine biosynthetic process"/>
    <property type="evidence" value="ECO:0007669"/>
    <property type="project" value="UniProtKB-UniPathway"/>
</dbReference>
<dbReference type="GO" id="GO:0009099">
    <property type="term" value="P:L-valine biosynthetic process"/>
    <property type="evidence" value="ECO:0007669"/>
    <property type="project" value="UniProtKB-UniPathway"/>
</dbReference>
<dbReference type="CDD" id="cd01557">
    <property type="entry name" value="BCAT_beta_family"/>
    <property type="match status" value="1"/>
</dbReference>
<dbReference type="FunFam" id="3.20.10.10:FF:000002">
    <property type="entry name" value="D-alanine aminotransferase"/>
    <property type="match status" value="1"/>
</dbReference>
<dbReference type="Gene3D" id="3.30.470.10">
    <property type="match status" value="1"/>
</dbReference>
<dbReference type="Gene3D" id="3.20.10.10">
    <property type="entry name" value="D-amino Acid Aminotransferase, subunit A, domain 2"/>
    <property type="match status" value="1"/>
</dbReference>
<dbReference type="InterPro" id="IPR001544">
    <property type="entry name" value="Aminotrans_IV"/>
</dbReference>
<dbReference type="InterPro" id="IPR018300">
    <property type="entry name" value="Aminotrans_IV_CS"/>
</dbReference>
<dbReference type="InterPro" id="IPR036038">
    <property type="entry name" value="Aminotransferase-like"/>
</dbReference>
<dbReference type="InterPro" id="IPR043132">
    <property type="entry name" value="BCAT-like_C"/>
</dbReference>
<dbReference type="InterPro" id="IPR043131">
    <property type="entry name" value="BCAT-like_N"/>
</dbReference>
<dbReference type="InterPro" id="IPR033939">
    <property type="entry name" value="BCAT_family"/>
</dbReference>
<dbReference type="InterPro" id="IPR050571">
    <property type="entry name" value="Class-IV_PLP-Dep_Aminotrnsfr"/>
</dbReference>
<dbReference type="NCBIfam" id="NF005146">
    <property type="entry name" value="PRK06606.1"/>
    <property type="match status" value="1"/>
</dbReference>
<dbReference type="PANTHER" id="PTHR42743">
    <property type="entry name" value="AMINO-ACID AMINOTRANSFERASE"/>
    <property type="match status" value="1"/>
</dbReference>
<dbReference type="PANTHER" id="PTHR42743:SF11">
    <property type="entry name" value="AMINODEOXYCHORISMATE LYASE"/>
    <property type="match status" value="1"/>
</dbReference>
<dbReference type="Pfam" id="PF01063">
    <property type="entry name" value="Aminotran_4"/>
    <property type="match status" value="1"/>
</dbReference>
<dbReference type="SUPFAM" id="SSF56752">
    <property type="entry name" value="D-aminoacid aminotransferase-like PLP-dependent enzymes"/>
    <property type="match status" value="1"/>
</dbReference>
<dbReference type="PROSITE" id="PS00770">
    <property type="entry name" value="AA_TRANSFER_CLASS_4"/>
    <property type="match status" value="1"/>
</dbReference>
<evidence type="ECO:0000250" key="1"/>
<evidence type="ECO:0000305" key="2"/>
<comment type="function">
    <text evidence="1">Acts on leucine, isoleucine and valine.</text>
</comment>
<comment type="catalytic activity">
    <reaction>
        <text>L-leucine + 2-oxoglutarate = 4-methyl-2-oxopentanoate + L-glutamate</text>
        <dbReference type="Rhea" id="RHEA:18321"/>
        <dbReference type="ChEBI" id="CHEBI:16810"/>
        <dbReference type="ChEBI" id="CHEBI:17865"/>
        <dbReference type="ChEBI" id="CHEBI:29985"/>
        <dbReference type="ChEBI" id="CHEBI:57427"/>
        <dbReference type="EC" id="2.6.1.42"/>
    </reaction>
</comment>
<comment type="catalytic activity">
    <reaction>
        <text>L-isoleucine + 2-oxoglutarate = (S)-3-methyl-2-oxopentanoate + L-glutamate</text>
        <dbReference type="Rhea" id="RHEA:24801"/>
        <dbReference type="ChEBI" id="CHEBI:16810"/>
        <dbReference type="ChEBI" id="CHEBI:29985"/>
        <dbReference type="ChEBI" id="CHEBI:35146"/>
        <dbReference type="ChEBI" id="CHEBI:58045"/>
        <dbReference type="EC" id="2.6.1.42"/>
    </reaction>
</comment>
<comment type="catalytic activity">
    <reaction>
        <text>L-valine + 2-oxoglutarate = 3-methyl-2-oxobutanoate + L-glutamate</text>
        <dbReference type="Rhea" id="RHEA:24813"/>
        <dbReference type="ChEBI" id="CHEBI:11851"/>
        <dbReference type="ChEBI" id="CHEBI:16810"/>
        <dbReference type="ChEBI" id="CHEBI:29985"/>
        <dbReference type="ChEBI" id="CHEBI:57762"/>
        <dbReference type="EC" id="2.6.1.42"/>
    </reaction>
</comment>
<comment type="cofactor">
    <cofactor evidence="1">
        <name>pyridoxal 5'-phosphate</name>
        <dbReference type="ChEBI" id="CHEBI:597326"/>
    </cofactor>
</comment>
<comment type="pathway">
    <text>Amino-acid biosynthesis; L-isoleucine biosynthesis; L-isoleucine from 2-oxobutanoate: step 4/4.</text>
</comment>
<comment type="pathway">
    <text>Amino-acid biosynthesis; L-leucine biosynthesis; L-leucine from 3-methyl-2-oxobutanoate: step 4/4.</text>
</comment>
<comment type="pathway">
    <text>Amino-acid biosynthesis; L-valine biosynthesis; L-valine from pyruvate: step 4/4.</text>
</comment>
<comment type="similarity">
    <text evidence="2">Belongs to the class-IV pyridoxal-phosphate-dependent aminotransferase family.</text>
</comment>
<sequence length="288" mass="32694">MIKLEQICRYVWINGDLIPYQFARIHVLTHSLHYSGSVFEGERAYNGKVFKLKEHTERLIQSAEALGLKVPYSVDEIIKAHEFLITHNNIKDAYIRPLIWCGDESLNITNPALSTNFLIASIPSMPMSCEQGVNLHVSRWRKAMPDSTPVQSKSAAQYNMAITSKKEAKALGYDDALLLDYEGFIAECTTTNIFFVKDTTLYTPIADRFLNGITRKTIIEIAKNLCLEVKEERLKLAQIEYFTGCFVTGTAIEVQNISSIDLGDKKILFEDCKIADLLKKEYLRIVRG</sequence>
<accession>Q9AKE5</accession>
<feature type="chain" id="PRO_0000280902" description="Probable branched-chain-amino-acid aminotransferase">
    <location>
        <begin position="1"/>
        <end position="288"/>
    </location>
</feature>
<feature type="modified residue" description="N6-(pyridoxal phosphate)lysine" evidence="1">
    <location>
        <position position="153"/>
    </location>
</feature>
<protein>
    <recommendedName>
        <fullName>Probable branched-chain-amino-acid aminotransferase</fullName>
        <shortName>BCAT</shortName>
        <ecNumber>2.6.1.42</ecNumber>
    </recommendedName>
</protein>
<name>ILVE_RICTY</name>
<keyword id="KW-0028">Amino-acid biosynthesis</keyword>
<keyword id="KW-0032">Aminotransferase</keyword>
<keyword id="KW-0100">Branched-chain amino acid biosynthesis</keyword>
<keyword id="KW-0663">Pyridoxal phosphate</keyword>
<keyword id="KW-0808">Transferase</keyword>
<proteinExistence type="inferred from homology"/>
<organism>
    <name type="scientific">Rickettsia typhi (strain ATCC VR-144 / Wilmington)</name>
    <dbReference type="NCBI Taxonomy" id="257363"/>
    <lineage>
        <taxon>Bacteria</taxon>
        <taxon>Pseudomonadati</taxon>
        <taxon>Pseudomonadota</taxon>
        <taxon>Alphaproteobacteria</taxon>
        <taxon>Rickettsiales</taxon>
        <taxon>Rickettsiaceae</taxon>
        <taxon>Rickettsieae</taxon>
        <taxon>Rickettsia</taxon>
        <taxon>typhus group</taxon>
    </lineage>
</organism>
<reference key="1">
    <citation type="journal article" date="2001" name="Mol. Biol. Evol.">
        <title>Pseudogenes, junk DNA, and the dynamics of Rickettsia genomes.</title>
        <authorList>
            <person name="Andersson J.O."/>
            <person name="Andersson S.G.E."/>
        </authorList>
    </citation>
    <scope>NUCLEOTIDE SEQUENCE [GENOMIC DNA]</scope>
    <source>
        <strain>ATCC VR-144 / Wilmington</strain>
    </source>
</reference>
<reference key="2">
    <citation type="journal article" date="2004" name="J. Bacteriol.">
        <title>Complete genome sequence of Rickettsia typhi and comparison with sequences of other Rickettsiae.</title>
        <authorList>
            <person name="McLeod M.P."/>
            <person name="Qin X."/>
            <person name="Karpathy S.E."/>
            <person name="Gioia J."/>
            <person name="Highlander S.K."/>
            <person name="Fox G.E."/>
            <person name="McNeill T.Z."/>
            <person name="Jiang H."/>
            <person name="Muzny D."/>
            <person name="Jacob L.S."/>
            <person name="Hawes A.C."/>
            <person name="Sodergren E."/>
            <person name="Gill R."/>
            <person name="Hume J."/>
            <person name="Morgan M."/>
            <person name="Fan G."/>
            <person name="Amin A.G."/>
            <person name="Gibbs R.A."/>
            <person name="Hong C."/>
            <person name="Yu X.-J."/>
            <person name="Walker D.H."/>
            <person name="Weinstock G.M."/>
        </authorList>
    </citation>
    <scope>NUCLEOTIDE SEQUENCE [LARGE SCALE GENOMIC DNA]</scope>
    <source>
        <strain>ATCC VR-144 / Wilmington</strain>
    </source>
</reference>